<evidence type="ECO:0000250" key="1"/>
<evidence type="ECO:0000255" key="2">
    <source>
        <dbReference type="PROSITE-ProRule" id="PRU10096"/>
    </source>
</evidence>
<evidence type="ECO:0000305" key="3"/>
<feature type="chain" id="PRO_0000295170" description="Uncharacterized zinc protease RF_0338">
    <location>
        <begin position="1"/>
        <end position="412"/>
    </location>
</feature>
<feature type="active site" description="Proton acceptor" evidence="2">
    <location>
        <position position="52"/>
    </location>
</feature>
<feature type="binding site" evidence="2">
    <location>
        <position position="49"/>
    </location>
    <ligand>
        <name>Zn(2+)</name>
        <dbReference type="ChEBI" id="CHEBI:29105"/>
    </ligand>
</feature>
<feature type="binding site" evidence="2">
    <location>
        <position position="53"/>
    </location>
    <ligand>
        <name>Zn(2+)</name>
        <dbReference type="ChEBI" id="CHEBI:29105"/>
    </ligand>
</feature>
<feature type="binding site" evidence="2">
    <location>
        <position position="129"/>
    </location>
    <ligand>
        <name>Zn(2+)</name>
        <dbReference type="ChEBI" id="CHEBI:29105"/>
    </ligand>
</feature>
<comment type="cofactor">
    <cofactor evidence="1">
        <name>Zn(2+)</name>
        <dbReference type="ChEBI" id="CHEBI:29105"/>
    </cofactor>
    <text evidence="1">Divalent metal cations. Binds Zn(2+).</text>
</comment>
<comment type="similarity">
    <text evidence="3">Belongs to the peptidase M16 family.</text>
</comment>
<sequence length="412" mass="46447">MKENFNISKLKNGLTVLTYNMPYVDSVAINLITKVGSRYENSEEEGISHFLEHMAFKGTTTRTAKQIAEEFDEIGGHFNAYTGHEKTIYYARVLSENCDKALNILADIIQNSIFAEEEIAKEYQVILQEIAHSQDNPDDLIYEKFYSSVYKDQPLGKPILGASKTLSSFTKEHFLSFIDKHYNAGNLYLSVAGNVDHDKIVSSAERLFSSLKQGEKSNFLPAKYIGGNSFINKDLEQTTLILGFEGTPYINLERLYRTQLLAIIFGGGMSSRLFQHIREKLGLAYAVGSYNSTYSDSGVFTIYASTAHDKLELLYKELKTEITKMTEKVNEEEMIRAKTQLRSNLLMAQEKVAYKSEEIGKNYAAFGKYIPPEEIMEIITNIKADDIINTANKIFSSITTSAIIGPNDLRGF</sequence>
<dbReference type="EC" id="3.4.24.-"/>
<dbReference type="EMBL" id="CP000053">
    <property type="protein sequence ID" value="AAY61189.1"/>
    <property type="molecule type" value="Genomic_DNA"/>
</dbReference>
<dbReference type="SMR" id="Q4UML9"/>
<dbReference type="STRING" id="315456.RF_0338"/>
<dbReference type="MEROPS" id="M16.016"/>
<dbReference type="KEGG" id="rfe:RF_0338"/>
<dbReference type="eggNOG" id="COG0612">
    <property type="taxonomic scope" value="Bacteria"/>
</dbReference>
<dbReference type="HOGENOM" id="CLU_009902_3_0_5"/>
<dbReference type="OrthoDB" id="9811314at2"/>
<dbReference type="Proteomes" id="UP000008548">
    <property type="component" value="Chromosome"/>
</dbReference>
<dbReference type="GO" id="GO:0046872">
    <property type="term" value="F:metal ion binding"/>
    <property type="evidence" value="ECO:0007669"/>
    <property type="project" value="UniProtKB-KW"/>
</dbReference>
<dbReference type="GO" id="GO:0004222">
    <property type="term" value="F:metalloendopeptidase activity"/>
    <property type="evidence" value="ECO:0007669"/>
    <property type="project" value="InterPro"/>
</dbReference>
<dbReference type="GO" id="GO:0006508">
    <property type="term" value="P:proteolysis"/>
    <property type="evidence" value="ECO:0007669"/>
    <property type="project" value="UniProtKB-KW"/>
</dbReference>
<dbReference type="FunFam" id="3.30.830.10:FF:000008">
    <property type="entry name" value="Mitochondrial-processing peptidase subunit beta"/>
    <property type="match status" value="1"/>
</dbReference>
<dbReference type="Gene3D" id="3.30.830.10">
    <property type="entry name" value="Metalloenzyme, LuxS/M16 peptidase-like"/>
    <property type="match status" value="2"/>
</dbReference>
<dbReference type="InterPro" id="IPR011249">
    <property type="entry name" value="Metalloenz_LuxS/M16"/>
</dbReference>
<dbReference type="InterPro" id="IPR050361">
    <property type="entry name" value="MPP/UQCRC_Complex"/>
</dbReference>
<dbReference type="InterPro" id="IPR011765">
    <property type="entry name" value="Pept_M16_N"/>
</dbReference>
<dbReference type="InterPro" id="IPR001431">
    <property type="entry name" value="Pept_M16_Zn_BS"/>
</dbReference>
<dbReference type="InterPro" id="IPR007863">
    <property type="entry name" value="Peptidase_M16_C"/>
</dbReference>
<dbReference type="PANTHER" id="PTHR11851">
    <property type="entry name" value="METALLOPROTEASE"/>
    <property type="match status" value="1"/>
</dbReference>
<dbReference type="PANTHER" id="PTHR11851:SF49">
    <property type="entry name" value="MITOCHONDRIAL-PROCESSING PEPTIDASE SUBUNIT ALPHA"/>
    <property type="match status" value="1"/>
</dbReference>
<dbReference type="Pfam" id="PF00675">
    <property type="entry name" value="Peptidase_M16"/>
    <property type="match status" value="1"/>
</dbReference>
<dbReference type="Pfam" id="PF05193">
    <property type="entry name" value="Peptidase_M16_C"/>
    <property type="match status" value="1"/>
</dbReference>
<dbReference type="SUPFAM" id="SSF63411">
    <property type="entry name" value="LuxS/MPP-like metallohydrolase"/>
    <property type="match status" value="2"/>
</dbReference>
<dbReference type="PROSITE" id="PS00143">
    <property type="entry name" value="INSULINASE"/>
    <property type="match status" value="1"/>
</dbReference>
<protein>
    <recommendedName>
        <fullName>Uncharacterized zinc protease RF_0338</fullName>
        <ecNumber>3.4.24.-</ecNumber>
    </recommendedName>
</protein>
<keyword id="KW-0378">Hydrolase</keyword>
<keyword id="KW-0479">Metal-binding</keyword>
<keyword id="KW-0482">Metalloprotease</keyword>
<keyword id="KW-0645">Protease</keyword>
<keyword id="KW-0862">Zinc</keyword>
<proteinExistence type="inferred from homology"/>
<organism>
    <name type="scientific">Rickettsia felis (strain ATCC VR-1525 / URRWXCal2)</name>
    <name type="common">Rickettsia azadi</name>
    <dbReference type="NCBI Taxonomy" id="315456"/>
    <lineage>
        <taxon>Bacteria</taxon>
        <taxon>Pseudomonadati</taxon>
        <taxon>Pseudomonadota</taxon>
        <taxon>Alphaproteobacteria</taxon>
        <taxon>Rickettsiales</taxon>
        <taxon>Rickettsiaceae</taxon>
        <taxon>Rickettsieae</taxon>
        <taxon>Rickettsia</taxon>
        <taxon>spotted fever group</taxon>
    </lineage>
</organism>
<reference key="1">
    <citation type="journal article" date="2005" name="PLoS Biol.">
        <title>The genome sequence of Rickettsia felis identifies the first putative conjugative plasmid in an obligate intracellular parasite.</title>
        <authorList>
            <person name="Ogata H."/>
            <person name="Renesto P."/>
            <person name="Audic S."/>
            <person name="Robert C."/>
            <person name="Blanc G."/>
            <person name="Fournier P.-E."/>
            <person name="Parinello H."/>
            <person name="Claverie J.-M."/>
            <person name="Raoult D."/>
        </authorList>
    </citation>
    <scope>NUCLEOTIDE SEQUENCE [LARGE SCALE GENOMIC DNA]</scope>
    <source>
        <strain>ATCC VR-1525 / URRWXCal2</strain>
    </source>
</reference>
<accession>Q4UML9</accession>
<name>Y338_RICFE</name>
<gene>
    <name type="ordered locus">RF_0338</name>
</gene>